<protein>
    <recommendedName>
        <fullName evidence="4">Small ribosomal subunit protein bS1</fullName>
    </recommendedName>
    <alternativeName>
        <fullName>30S ribosomal protein S1</fullName>
    </alternativeName>
</protein>
<proteinExistence type="evidence at protein level"/>
<keyword id="KW-1185">Reference proteome</keyword>
<keyword id="KW-0677">Repeat</keyword>
<keyword id="KW-0687">Ribonucleoprotein</keyword>
<keyword id="KW-0689">Ribosomal protein</keyword>
<keyword id="KW-0694">RNA-binding</keyword>
<name>RS1_COXBU</name>
<dbReference type="EMBL" id="AE016828">
    <property type="protein sequence ID" value="AAO90074.2"/>
    <property type="status" value="ALT_INIT"/>
    <property type="molecule type" value="Genomic_DNA"/>
</dbReference>
<dbReference type="RefSeq" id="NP_819560.3">
    <property type="nucleotide sequence ID" value="NC_002971.4"/>
</dbReference>
<dbReference type="RefSeq" id="WP_012220248.1">
    <property type="nucleotide sequence ID" value="NC_002971.4"/>
</dbReference>
<dbReference type="SMR" id="Q83E09"/>
<dbReference type="STRING" id="227377.CBU_0528"/>
<dbReference type="EnsemblBacteria" id="AAO90074">
    <property type="protein sequence ID" value="AAO90074"/>
    <property type="gene ID" value="CBU_0528"/>
</dbReference>
<dbReference type="GeneID" id="1208413"/>
<dbReference type="KEGG" id="cbu:CBU_0528"/>
<dbReference type="PATRIC" id="fig|227377.7.peg.523"/>
<dbReference type="eggNOG" id="COG0539">
    <property type="taxonomic scope" value="Bacteria"/>
</dbReference>
<dbReference type="HOGENOM" id="CLU_015805_2_1_6"/>
<dbReference type="OrthoDB" id="9804077at2"/>
<dbReference type="Proteomes" id="UP000002671">
    <property type="component" value="Chromosome"/>
</dbReference>
<dbReference type="GO" id="GO:0022627">
    <property type="term" value="C:cytosolic small ribosomal subunit"/>
    <property type="evidence" value="ECO:0000318"/>
    <property type="project" value="GO_Central"/>
</dbReference>
<dbReference type="GO" id="GO:0003729">
    <property type="term" value="F:mRNA binding"/>
    <property type="evidence" value="ECO:0000318"/>
    <property type="project" value="GO_Central"/>
</dbReference>
<dbReference type="GO" id="GO:0003735">
    <property type="term" value="F:structural constituent of ribosome"/>
    <property type="evidence" value="ECO:0000318"/>
    <property type="project" value="GO_Central"/>
</dbReference>
<dbReference type="GO" id="GO:0006412">
    <property type="term" value="P:translation"/>
    <property type="evidence" value="ECO:0000318"/>
    <property type="project" value="GO_Central"/>
</dbReference>
<dbReference type="CDD" id="cd05687">
    <property type="entry name" value="S1_RPS1_repeat_ec1_hs1"/>
    <property type="match status" value="1"/>
</dbReference>
<dbReference type="CDD" id="cd04465">
    <property type="entry name" value="S1_RPS1_repeat_ec2_hs2"/>
    <property type="match status" value="1"/>
</dbReference>
<dbReference type="CDD" id="cd05688">
    <property type="entry name" value="S1_RPS1_repeat_ec3"/>
    <property type="match status" value="1"/>
</dbReference>
<dbReference type="CDD" id="cd05689">
    <property type="entry name" value="S1_RPS1_repeat_ec4"/>
    <property type="match status" value="1"/>
</dbReference>
<dbReference type="CDD" id="cd05691">
    <property type="entry name" value="S1_RPS1_repeat_ec6"/>
    <property type="match status" value="1"/>
</dbReference>
<dbReference type="FunFam" id="2.40.50.140:FF:000011">
    <property type="entry name" value="30S ribosomal protein S1"/>
    <property type="match status" value="1"/>
</dbReference>
<dbReference type="FunFam" id="2.40.50.140:FF:000016">
    <property type="entry name" value="30S ribosomal protein S1"/>
    <property type="match status" value="1"/>
</dbReference>
<dbReference type="FunFam" id="2.40.50.140:FF:000018">
    <property type="entry name" value="30S ribosomal protein S1"/>
    <property type="match status" value="1"/>
</dbReference>
<dbReference type="Gene3D" id="2.40.50.140">
    <property type="entry name" value="Nucleic acid-binding proteins"/>
    <property type="match status" value="6"/>
</dbReference>
<dbReference type="InterPro" id="IPR012340">
    <property type="entry name" value="NA-bd_OB-fold"/>
</dbReference>
<dbReference type="InterPro" id="IPR050437">
    <property type="entry name" value="Ribos_protein_bS1-like"/>
</dbReference>
<dbReference type="InterPro" id="IPR000110">
    <property type="entry name" value="Ribosomal_bS1"/>
</dbReference>
<dbReference type="InterPro" id="IPR035104">
    <property type="entry name" value="Ribosomal_protein_S1-like"/>
</dbReference>
<dbReference type="InterPro" id="IPR003029">
    <property type="entry name" value="S1_domain"/>
</dbReference>
<dbReference type="NCBIfam" id="NF004952">
    <property type="entry name" value="PRK06299.1-2"/>
    <property type="match status" value="1"/>
</dbReference>
<dbReference type="NCBIfam" id="NF004954">
    <property type="entry name" value="PRK06299.1-4"/>
    <property type="match status" value="1"/>
</dbReference>
<dbReference type="NCBIfam" id="TIGR00717">
    <property type="entry name" value="rpsA"/>
    <property type="match status" value="1"/>
</dbReference>
<dbReference type="PANTHER" id="PTHR10724">
    <property type="entry name" value="30S RIBOSOMAL PROTEIN S1"/>
    <property type="match status" value="1"/>
</dbReference>
<dbReference type="PANTHER" id="PTHR10724:SF7">
    <property type="entry name" value="SMALL RIBOSOMAL SUBUNIT PROTEIN BS1C"/>
    <property type="match status" value="1"/>
</dbReference>
<dbReference type="Pfam" id="PF00575">
    <property type="entry name" value="S1"/>
    <property type="match status" value="6"/>
</dbReference>
<dbReference type="PIRSF" id="PIRSF002111">
    <property type="entry name" value="RpsA"/>
    <property type="match status" value="1"/>
</dbReference>
<dbReference type="PRINTS" id="PR00681">
    <property type="entry name" value="RIBOSOMALS1"/>
</dbReference>
<dbReference type="SMART" id="SM00316">
    <property type="entry name" value="S1"/>
    <property type="match status" value="6"/>
</dbReference>
<dbReference type="SUPFAM" id="SSF50249">
    <property type="entry name" value="Nucleic acid-binding proteins"/>
    <property type="match status" value="6"/>
</dbReference>
<dbReference type="PROSITE" id="PS50126">
    <property type="entry name" value="S1"/>
    <property type="match status" value="6"/>
</dbReference>
<reference key="1">
    <citation type="journal article" date="2003" name="Proc. Natl. Acad. Sci. U.S.A.">
        <title>Complete genome sequence of the Q-fever pathogen, Coxiella burnetii.</title>
        <authorList>
            <person name="Seshadri R."/>
            <person name="Paulsen I.T."/>
            <person name="Eisen J.A."/>
            <person name="Read T.D."/>
            <person name="Nelson K.E."/>
            <person name="Nelson W.C."/>
            <person name="Ward N.L."/>
            <person name="Tettelin H."/>
            <person name="Davidsen T.M."/>
            <person name="Beanan M.J."/>
            <person name="DeBoy R.T."/>
            <person name="Daugherty S.C."/>
            <person name="Brinkac L.M."/>
            <person name="Madupu R."/>
            <person name="Dodson R.J."/>
            <person name="Khouri H.M."/>
            <person name="Lee K.H."/>
            <person name="Carty H.A."/>
            <person name="Scanlan D."/>
            <person name="Heinzen R.A."/>
            <person name="Thompson H.A."/>
            <person name="Samuel J.E."/>
            <person name="Fraser C.M."/>
            <person name="Heidelberg J.F."/>
        </authorList>
    </citation>
    <scope>NUCLEOTIDE SEQUENCE [LARGE SCALE GENOMIC DNA]</scope>
    <source>
        <strain>RSA 493 / Nine Mile phase I</strain>
    </source>
</reference>
<reference key="2">
    <citation type="journal article" date="2007" name="Infect. Immun.">
        <title>Proteome and antigen profiling of Coxiella burnetii developmental forms.</title>
        <authorList>
            <person name="Coleman S.A."/>
            <person name="Fischer E.R."/>
            <person name="Cockrell D.C."/>
            <person name="Voth D.E."/>
            <person name="Howe D."/>
            <person name="Mead D.J."/>
            <person name="Samuel J.E."/>
            <person name="Heinzen R.A."/>
        </authorList>
    </citation>
    <scope>IDENTIFICATION BY MASS SPECTROMETRY</scope>
    <scope>DEVELOPMENTAL STAGE</scope>
    <source>
        <strain>Nine Mile Crazy / RSA 514</strain>
    </source>
</reference>
<gene>
    <name type="primary">rpsA</name>
    <name type="ordered locus">CBU_0528</name>
</gene>
<evidence type="ECO:0000250" key="1"/>
<evidence type="ECO:0000255" key="2">
    <source>
        <dbReference type="PROSITE-ProRule" id="PRU00180"/>
    </source>
</evidence>
<evidence type="ECO:0000269" key="3">
    <source>
    </source>
</evidence>
<evidence type="ECO:0000305" key="4"/>
<comment type="function">
    <text evidence="1">Binds mRNA; thus facilitating recognition of the initiation point. It is needed to translate mRNA with a short Shine-Dalgarno (SD) purine-rich sequence (By similarity).</text>
</comment>
<comment type="developmental stage">
    <text evidence="3">More than twofold more abundant in the large cell variant (LCV) stage than in the small cell variant (SCV) stage (at protein level). LCVs are more metabolically active than SCVs.</text>
</comment>
<comment type="similarity">
    <text evidence="4">Belongs to the bacterial ribosomal protein bS1 family.</text>
</comment>
<comment type="sequence caution" evidence="4">
    <conflict type="erroneous initiation">
        <sequence resource="EMBL-CDS" id="AAO90074"/>
    </conflict>
</comment>
<sequence>MSETFAELFEKSLTETDLRPGALVKATVVEVRPDRVIVNAGLKSEGIIPASEFRNEEPHVGDEFFVVIEASDNGFGETRLSREKARRAKAWSELEKAYKAGEMVKGVIIERVKGGFTVDLNSVRAFLPGSLVDVKPVRDPGYLEDKEIDFKIIKMDQRRNNVVVSRRAVMEAETSAERQARLEELQEGQEIKGVIKNITDYGAFVDLGGVDGLLHITDMAWGRVKHPSDLLNVGDEVHVKVLKFDRDKKRVSLGMKQLADDPWAKIERRYPVNSRVFGKVTNITDYGCFVKLEEGVEGLVHTSELDWTNKNIHPSKVVQSGEEVEVMVLEIDEERRRISLGIKQCKRNPWQEFAEKHEKDEKITGKVRSITDFGMFIGLEGDIDGLVHLSDISWTESGEEAIRNYKKGDEVQAVILGIDPERERISLGIKQLEGDPFMEFVESYDKDAVIQAKVKEVESKQAVLELADQVLGQMRLADYTYDRVKDLTQELNVGDEVAVKIVNVDRKNRLINVSHKAVEGRSEKGTRTVSDVPTKTTLGDLLKEKIQSKDE</sequence>
<accession>Q83E09</accession>
<organism>
    <name type="scientific">Coxiella burnetii (strain RSA 493 / Nine Mile phase I)</name>
    <dbReference type="NCBI Taxonomy" id="227377"/>
    <lineage>
        <taxon>Bacteria</taxon>
        <taxon>Pseudomonadati</taxon>
        <taxon>Pseudomonadota</taxon>
        <taxon>Gammaproteobacteria</taxon>
        <taxon>Legionellales</taxon>
        <taxon>Coxiellaceae</taxon>
        <taxon>Coxiella</taxon>
    </lineage>
</organism>
<feature type="chain" id="PRO_0000322123" description="Small ribosomal subunit protein bS1">
    <location>
        <begin position="1"/>
        <end position="551"/>
    </location>
</feature>
<feature type="domain" description="S1 motif 1" evidence="2">
    <location>
        <begin position="21"/>
        <end position="83"/>
    </location>
</feature>
<feature type="domain" description="S1 motif 2" evidence="2">
    <location>
        <begin position="101"/>
        <end position="167"/>
    </location>
</feature>
<feature type="domain" description="S1 motif 3" evidence="2">
    <location>
        <begin position="188"/>
        <end position="256"/>
    </location>
</feature>
<feature type="domain" description="S1 motif 4" evidence="2">
    <location>
        <begin position="273"/>
        <end position="343"/>
    </location>
</feature>
<feature type="domain" description="S1 motif 5" evidence="2">
    <location>
        <begin position="360"/>
        <end position="430"/>
    </location>
</feature>
<feature type="domain" description="S1 motif 6" evidence="2">
    <location>
        <begin position="447"/>
        <end position="516"/>
    </location>
</feature>